<evidence type="ECO:0000255" key="1">
    <source>
        <dbReference type="HAMAP-Rule" id="MF_00457"/>
    </source>
</evidence>
<accession>C3PB77</accession>
<keyword id="KW-0378">Hydrolase</keyword>
<gene>
    <name type="ordered locus">BAA_4871</name>
</gene>
<protein>
    <recommendedName>
        <fullName evidence="1">UPF0173 metal-dependent hydrolase BAA_4871</fullName>
    </recommendedName>
</protein>
<organism>
    <name type="scientific">Bacillus anthracis (strain A0248)</name>
    <dbReference type="NCBI Taxonomy" id="592021"/>
    <lineage>
        <taxon>Bacteria</taxon>
        <taxon>Bacillati</taxon>
        <taxon>Bacillota</taxon>
        <taxon>Bacilli</taxon>
        <taxon>Bacillales</taxon>
        <taxon>Bacillaceae</taxon>
        <taxon>Bacillus</taxon>
        <taxon>Bacillus cereus group</taxon>
    </lineage>
</organism>
<reference key="1">
    <citation type="submission" date="2009-04" db="EMBL/GenBank/DDBJ databases">
        <title>Genome sequence of Bacillus anthracis A0248.</title>
        <authorList>
            <person name="Dodson R.J."/>
            <person name="Munk A.C."/>
            <person name="Bruce D."/>
            <person name="Detter C."/>
            <person name="Tapia R."/>
            <person name="Sutton G."/>
            <person name="Sims D."/>
            <person name="Brettin T."/>
        </authorList>
    </citation>
    <scope>NUCLEOTIDE SEQUENCE [LARGE SCALE GENOMIC DNA]</scope>
    <source>
        <strain>A0248</strain>
    </source>
</reference>
<dbReference type="EMBL" id="CP001598">
    <property type="protein sequence ID" value="ACQ50626.1"/>
    <property type="molecule type" value="Genomic_DNA"/>
</dbReference>
<dbReference type="RefSeq" id="WP_000868940.1">
    <property type="nucleotide sequence ID" value="NC_012659.1"/>
</dbReference>
<dbReference type="SMR" id="C3PB77"/>
<dbReference type="GeneID" id="45024483"/>
<dbReference type="KEGG" id="bai:BAA_4871"/>
<dbReference type="HOGENOM" id="CLU_070010_4_1_9"/>
<dbReference type="GO" id="GO:0016787">
    <property type="term" value="F:hydrolase activity"/>
    <property type="evidence" value="ECO:0007669"/>
    <property type="project" value="UniProtKB-UniRule"/>
</dbReference>
<dbReference type="Gene3D" id="3.60.15.10">
    <property type="entry name" value="Ribonuclease Z/Hydroxyacylglutathione hydrolase-like"/>
    <property type="match status" value="1"/>
</dbReference>
<dbReference type="HAMAP" id="MF_00457">
    <property type="entry name" value="UPF0173"/>
    <property type="match status" value="1"/>
</dbReference>
<dbReference type="InterPro" id="IPR001279">
    <property type="entry name" value="Metallo-B-lactamas"/>
</dbReference>
<dbReference type="InterPro" id="IPR036866">
    <property type="entry name" value="RibonucZ/Hydroxyglut_hydro"/>
</dbReference>
<dbReference type="InterPro" id="IPR022877">
    <property type="entry name" value="UPF0173"/>
</dbReference>
<dbReference type="InterPro" id="IPR050114">
    <property type="entry name" value="UPF0173_UPF0282_UlaG_hydrolase"/>
</dbReference>
<dbReference type="NCBIfam" id="NF001911">
    <property type="entry name" value="PRK00685.1"/>
    <property type="match status" value="1"/>
</dbReference>
<dbReference type="PANTHER" id="PTHR43546:SF3">
    <property type="entry name" value="UPF0173 METAL-DEPENDENT HYDROLASE MJ1163"/>
    <property type="match status" value="1"/>
</dbReference>
<dbReference type="PANTHER" id="PTHR43546">
    <property type="entry name" value="UPF0173 METAL-DEPENDENT HYDROLASE MJ1163-RELATED"/>
    <property type="match status" value="1"/>
</dbReference>
<dbReference type="Pfam" id="PF12706">
    <property type="entry name" value="Lactamase_B_2"/>
    <property type="match status" value="1"/>
</dbReference>
<dbReference type="SMART" id="SM00849">
    <property type="entry name" value="Lactamase_B"/>
    <property type="match status" value="1"/>
</dbReference>
<dbReference type="SUPFAM" id="SSF56281">
    <property type="entry name" value="Metallo-hydrolase/oxidoreductase"/>
    <property type="match status" value="1"/>
</dbReference>
<comment type="similarity">
    <text evidence="1">Belongs to the UPF0173 family.</text>
</comment>
<proteinExistence type="inferred from homology"/>
<sequence length="227" mass="24889">MKVSYHGHSVVKIETNGKVILIDPFLTGNPKTDLKAEDVKVDAILLSHGHGDHVGDTVELAKKNNAVVVAPFELATFLSWQGVNTHPMHIGGSHEFDFGKVKFTQAFHGSSYIDEENKTITYTGMPAGILFTAEEKTLYHAGDTALFSDMKLIGELNNIDVAFLPIGDNFTMGPEDAVLAAKWVQAKTVVPMHYNTFPVIEQDPYQFVEKLQNCTGKVLEAGESITL</sequence>
<feature type="chain" id="PRO_1000197804" description="UPF0173 metal-dependent hydrolase BAA_4871">
    <location>
        <begin position="1"/>
        <end position="227"/>
    </location>
</feature>
<name>Y4871_BACAA</name>